<feature type="chain" id="PRO_0000168315" description="L-lactate dehydrogenase 3">
    <location>
        <begin position="1"/>
        <end position="316"/>
    </location>
</feature>
<feature type="active site" description="Proton acceptor" evidence="1">
    <location>
        <position position="178"/>
    </location>
</feature>
<feature type="binding site" evidence="1">
    <location>
        <position position="16"/>
    </location>
    <ligand>
        <name>NAD(+)</name>
        <dbReference type="ChEBI" id="CHEBI:57540"/>
    </ligand>
</feature>
<feature type="binding site" evidence="1">
    <location>
        <position position="37"/>
    </location>
    <ligand>
        <name>NAD(+)</name>
        <dbReference type="ChEBI" id="CHEBI:57540"/>
    </ligand>
</feature>
<feature type="binding site" evidence="1">
    <location>
        <position position="42"/>
    </location>
    <ligand>
        <name>NAD(+)</name>
        <dbReference type="ChEBI" id="CHEBI:57540"/>
    </ligand>
</feature>
<feature type="binding site" evidence="1">
    <location>
        <position position="68"/>
    </location>
    <ligand>
        <name>NAD(+)</name>
        <dbReference type="ChEBI" id="CHEBI:57540"/>
    </ligand>
</feature>
<feature type="binding site" evidence="1">
    <location>
        <position position="91"/>
    </location>
    <ligand>
        <name>substrate</name>
    </ligand>
</feature>
<feature type="binding site" evidence="1">
    <location>
        <position position="104"/>
    </location>
    <ligand>
        <name>NAD(+)</name>
        <dbReference type="ChEBI" id="CHEBI:57540"/>
    </ligand>
</feature>
<feature type="binding site" evidence="1">
    <location>
        <begin position="121"/>
        <end position="123"/>
    </location>
    <ligand>
        <name>NAD(+)</name>
        <dbReference type="ChEBI" id="CHEBI:57540"/>
    </ligand>
</feature>
<feature type="binding site" evidence="1">
    <location>
        <begin position="123"/>
        <end position="126"/>
    </location>
    <ligand>
        <name>substrate</name>
    </ligand>
</feature>
<feature type="binding site" evidence="1">
    <location>
        <position position="146"/>
    </location>
    <ligand>
        <name>NAD(+)</name>
        <dbReference type="ChEBI" id="CHEBI:57540"/>
    </ligand>
</feature>
<feature type="binding site" evidence="1">
    <location>
        <begin position="151"/>
        <end position="154"/>
    </location>
    <ligand>
        <name>substrate</name>
    </ligand>
</feature>
<feature type="binding site" evidence="1">
    <location>
        <position position="156"/>
    </location>
    <ligand>
        <name>beta-D-fructose 1,6-bisphosphate</name>
        <dbReference type="ChEBI" id="CHEBI:32966"/>
        <note>allosteric activator</note>
    </ligand>
</feature>
<feature type="binding site" evidence="1">
    <location>
        <position position="171"/>
    </location>
    <ligand>
        <name>beta-D-fructose 1,6-bisphosphate</name>
        <dbReference type="ChEBI" id="CHEBI:32966"/>
        <note>allosteric activator</note>
    </ligand>
</feature>
<feature type="binding site" evidence="1">
    <location>
        <position position="233"/>
    </location>
    <ligand>
        <name>substrate</name>
    </ligand>
</feature>
<dbReference type="EC" id="1.1.1.27" evidence="1"/>
<dbReference type="EMBL" id="AE016879">
    <property type="protein sequence ID" value="AAP28905.1"/>
    <property type="molecule type" value="Genomic_DNA"/>
</dbReference>
<dbReference type="EMBL" id="AE017334">
    <property type="protein sequence ID" value="AAT34368.1"/>
    <property type="molecule type" value="Genomic_DNA"/>
</dbReference>
<dbReference type="EMBL" id="AE017225">
    <property type="protein sequence ID" value="AAT57161.1"/>
    <property type="molecule type" value="Genomic_DNA"/>
</dbReference>
<dbReference type="RefSeq" id="NP_847419.1">
    <property type="nucleotide sequence ID" value="NC_003997.3"/>
</dbReference>
<dbReference type="RefSeq" id="WP_000820659.1">
    <property type="nucleotide sequence ID" value="NZ_VTZL01000005.1"/>
</dbReference>
<dbReference type="RefSeq" id="YP_031111.1">
    <property type="nucleotide sequence ID" value="NC_005945.1"/>
</dbReference>
<dbReference type="SMR" id="Q81XJ7"/>
<dbReference type="STRING" id="261594.GBAA_5240"/>
<dbReference type="DNASU" id="1084686"/>
<dbReference type="KEGG" id="ban:BA_5240"/>
<dbReference type="KEGG" id="bar:GBAA_5240"/>
<dbReference type="KEGG" id="bat:BAS4869"/>
<dbReference type="PATRIC" id="fig|198094.11.peg.5201"/>
<dbReference type="eggNOG" id="COG0039">
    <property type="taxonomic scope" value="Bacteria"/>
</dbReference>
<dbReference type="HOGENOM" id="CLU_045401_1_1_9"/>
<dbReference type="OMA" id="EIMINAQ"/>
<dbReference type="UniPathway" id="UPA00554">
    <property type="reaction ID" value="UER00611"/>
</dbReference>
<dbReference type="Proteomes" id="UP000000427">
    <property type="component" value="Chromosome"/>
</dbReference>
<dbReference type="Proteomes" id="UP000000594">
    <property type="component" value="Chromosome"/>
</dbReference>
<dbReference type="GO" id="GO:0005737">
    <property type="term" value="C:cytoplasm"/>
    <property type="evidence" value="ECO:0007669"/>
    <property type="project" value="UniProtKB-SubCell"/>
</dbReference>
<dbReference type="GO" id="GO:0004459">
    <property type="term" value="F:L-lactate dehydrogenase activity"/>
    <property type="evidence" value="ECO:0007669"/>
    <property type="project" value="UniProtKB-UniRule"/>
</dbReference>
<dbReference type="GO" id="GO:0006096">
    <property type="term" value="P:glycolytic process"/>
    <property type="evidence" value="ECO:0007669"/>
    <property type="project" value="UniProtKB-UniRule"/>
</dbReference>
<dbReference type="GO" id="GO:0006089">
    <property type="term" value="P:lactate metabolic process"/>
    <property type="evidence" value="ECO:0007669"/>
    <property type="project" value="TreeGrafter"/>
</dbReference>
<dbReference type="CDD" id="cd05291">
    <property type="entry name" value="HicDH_like"/>
    <property type="match status" value="1"/>
</dbReference>
<dbReference type="FunFam" id="3.90.110.10:FF:000005">
    <property type="entry name" value="L-lactate dehydrogenase"/>
    <property type="match status" value="1"/>
</dbReference>
<dbReference type="FunFam" id="3.40.50.720:FF:000018">
    <property type="entry name" value="Malate dehydrogenase"/>
    <property type="match status" value="1"/>
</dbReference>
<dbReference type="Gene3D" id="3.90.110.10">
    <property type="entry name" value="Lactate dehydrogenase/glycoside hydrolase, family 4, C-terminal"/>
    <property type="match status" value="1"/>
</dbReference>
<dbReference type="Gene3D" id="3.40.50.720">
    <property type="entry name" value="NAD(P)-binding Rossmann-like Domain"/>
    <property type="match status" value="1"/>
</dbReference>
<dbReference type="HAMAP" id="MF_00488">
    <property type="entry name" value="Lactate_dehydrog"/>
    <property type="match status" value="1"/>
</dbReference>
<dbReference type="InterPro" id="IPR001557">
    <property type="entry name" value="L-lactate/malate_DH"/>
</dbReference>
<dbReference type="InterPro" id="IPR011304">
    <property type="entry name" value="L-lactate_DH"/>
</dbReference>
<dbReference type="InterPro" id="IPR018177">
    <property type="entry name" value="L-lactate_DH_AS"/>
</dbReference>
<dbReference type="InterPro" id="IPR022383">
    <property type="entry name" value="Lactate/malate_DH_C"/>
</dbReference>
<dbReference type="InterPro" id="IPR001236">
    <property type="entry name" value="Lactate/malate_DH_N"/>
</dbReference>
<dbReference type="InterPro" id="IPR015955">
    <property type="entry name" value="Lactate_DH/Glyco_Ohase_4_C"/>
</dbReference>
<dbReference type="InterPro" id="IPR036291">
    <property type="entry name" value="NAD(P)-bd_dom_sf"/>
</dbReference>
<dbReference type="NCBIfam" id="TIGR01771">
    <property type="entry name" value="L-LDH-NAD"/>
    <property type="match status" value="1"/>
</dbReference>
<dbReference type="NCBIfam" id="NF000824">
    <property type="entry name" value="PRK00066.1"/>
    <property type="match status" value="1"/>
</dbReference>
<dbReference type="NCBIfam" id="NF004863">
    <property type="entry name" value="PRK06223.1"/>
    <property type="match status" value="1"/>
</dbReference>
<dbReference type="PANTHER" id="PTHR43128">
    <property type="entry name" value="L-2-HYDROXYCARBOXYLATE DEHYDROGENASE (NAD(P)(+))"/>
    <property type="match status" value="1"/>
</dbReference>
<dbReference type="PANTHER" id="PTHR43128:SF16">
    <property type="entry name" value="L-LACTATE DEHYDROGENASE"/>
    <property type="match status" value="1"/>
</dbReference>
<dbReference type="Pfam" id="PF02866">
    <property type="entry name" value="Ldh_1_C"/>
    <property type="match status" value="1"/>
</dbReference>
<dbReference type="Pfam" id="PF00056">
    <property type="entry name" value="Ldh_1_N"/>
    <property type="match status" value="1"/>
</dbReference>
<dbReference type="PIRSF" id="PIRSF000102">
    <property type="entry name" value="Lac_mal_DH"/>
    <property type="match status" value="1"/>
</dbReference>
<dbReference type="PRINTS" id="PR00086">
    <property type="entry name" value="LLDHDRGNASE"/>
</dbReference>
<dbReference type="SUPFAM" id="SSF56327">
    <property type="entry name" value="LDH C-terminal domain-like"/>
    <property type="match status" value="1"/>
</dbReference>
<dbReference type="SUPFAM" id="SSF51735">
    <property type="entry name" value="NAD(P)-binding Rossmann-fold domains"/>
    <property type="match status" value="1"/>
</dbReference>
<dbReference type="PROSITE" id="PS00064">
    <property type="entry name" value="L_LDH"/>
    <property type="match status" value="1"/>
</dbReference>
<gene>
    <name evidence="1" type="primary">ldh3</name>
    <name type="synonym">ldh-3</name>
    <name type="ordered locus">BA_5240</name>
    <name type="ordered locus">GBAA_5240</name>
    <name type="ordered locus">BAS4869</name>
</gene>
<proteinExistence type="inferred from homology"/>
<organism>
    <name type="scientific">Bacillus anthracis</name>
    <dbReference type="NCBI Taxonomy" id="1392"/>
    <lineage>
        <taxon>Bacteria</taxon>
        <taxon>Bacillati</taxon>
        <taxon>Bacillota</taxon>
        <taxon>Bacilli</taxon>
        <taxon>Bacillales</taxon>
        <taxon>Bacillaceae</taxon>
        <taxon>Bacillus</taxon>
        <taxon>Bacillus cereus group</taxon>
    </lineage>
</organism>
<accession>Q81XJ7</accession>
<accession>Q6HRC7</accession>
<accession>Q6KKP6</accession>
<evidence type="ECO:0000255" key="1">
    <source>
        <dbReference type="HAMAP-Rule" id="MF_00488"/>
    </source>
</evidence>
<comment type="function">
    <text evidence="1">Catalyzes the conversion of lactate to pyruvate.</text>
</comment>
<comment type="catalytic activity">
    <reaction evidence="1">
        <text>(S)-lactate + NAD(+) = pyruvate + NADH + H(+)</text>
        <dbReference type="Rhea" id="RHEA:23444"/>
        <dbReference type="ChEBI" id="CHEBI:15361"/>
        <dbReference type="ChEBI" id="CHEBI:15378"/>
        <dbReference type="ChEBI" id="CHEBI:16651"/>
        <dbReference type="ChEBI" id="CHEBI:57540"/>
        <dbReference type="ChEBI" id="CHEBI:57945"/>
        <dbReference type="EC" id="1.1.1.27"/>
    </reaction>
</comment>
<comment type="activity regulation">
    <text evidence="1">Allosterically activated by fructose 1,6-bisphosphate (FBP).</text>
</comment>
<comment type="pathway">
    <text evidence="1">Fermentation; pyruvate fermentation to lactate; (S)-lactate from pyruvate: step 1/1.</text>
</comment>
<comment type="subunit">
    <text evidence="1">Homotetramer.</text>
</comment>
<comment type="subcellular location">
    <subcellularLocation>
        <location evidence="1">Cytoplasm</location>
    </subcellularLocation>
</comment>
<comment type="similarity">
    <text evidence="1">Belongs to the LDH/MDH superfamily. LDH family.</text>
</comment>
<protein>
    <recommendedName>
        <fullName evidence="1">L-lactate dehydrogenase 3</fullName>
        <shortName evidence="1">L-LDH 3</shortName>
        <ecNumber evidence="1">1.1.1.27</ecNumber>
    </recommendedName>
</protein>
<name>LDH3_BACAN</name>
<sequence>MKRHTRKIAIIGTGLVGSSCAYSIVNQGICEELLLIDINHERAVGEAMDLSHCINFTNTRTKVYAGSYEDCKDMDIVIITAGPAPKPGQSRLDTLGASAKIMESVVGGVMESGFDGIFLLASNPVDIITYQVWKLSGLPRNRVIGTGTSLDSSRLRTILSEMLHVDPRSIHGYSLGEHGDSQMVAWSHVTVGGKPILQILEEQKERFGEIDLDEIVEKTAKAGWEIYKRKGTTYYGIGNSLAYIASSIFNDDHRVIAVSAILDGEYGEYDICTGVPAIITRDGIREIVELNLTEDEESRFAKSNDILRDYMKTIGY</sequence>
<keyword id="KW-0021">Allosteric enzyme</keyword>
<keyword id="KW-0963">Cytoplasm</keyword>
<keyword id="KW-0520">NAD</keyword>
<keyword id="KW-0560">Oxidoreductase</keyword>
<keyword id="KW-1185">Reference proteome</keyword>
<reference key="1">
    <citation type="journal article" date="2003" name="Nature">
        <title>The genome sequence of Bacillus anthracis Ames and comparison to closely related bacteria.</title>
        <authorList>
            <person name="Read T.D."/>
            <person name="Peterson S.N."/>
            <person name="Tourasse N.J."/>
            <person name="Baillie L.W."/>
            <person name="Paulsen I.T."/>
            <person name="Nelson K.E."/>
            <person name="Tettelin H."/>
            <person name="Fouts D.E."/>
            <person name="Eisen J.A."/>
            <person name="Gill S.R."/>
            <person name="Holtzapple E.K."/>
            <person name="Okstad O.A."/>
            <person name="Helgason E."/>
            <person name="Rilstone J."/>
            <person name="Wu M."/>
            <person name="Kolonay J.F."/>
            <person name="Beanan M.J."/>
            <person name="Dodson R.J."/>
            <person name="Brinkac L.M."/>
            <person name="Gwinn M.L."/>
            <person name="DeBoy R.T."/>
            <person name="Madpu R."/>
            <person name="Daugherty S.C."/>
            <person name="Durkin A.S."/>
            <person name="Haft D.H."/>
            <person name="Nelson W.C."/>
            <person name="Peterson J.D."/>
            <person name="Pop M."/>
            <person name="Khouri H.M."/>
            <person name="Radune D."/>
            <person name="Benton J.L."/>
            <person name="Mahamoud Y."/>
            <person name="Jiang L."/>
            <person name="Hance I.R."/>
            <person name="Weidman J.F."/>
            <person name="Berry K.J."/>
            <person name="Plaut R.D."/>
            <person name="Wolf A.M."/>
            <person name="Watkins K.L."/>
            <person name="Nierman W.C."/>
            <person name="Hazen A."/>
            <person name="Cline R.T."/>
            <person name="Redmond C."/>
            <person name="Thwaite J.E."/>
            <person name="White O."/>
            <person name="Salzberg S.L."/>
            <person name="Thomason B."/>
            <person name="Friedlander A.M."/>
            <person name="Koehler T.M."/>
            <person name="Hanna P.C."/>
            <person name="Kolstoe A.-B."/>
            <person name="Fraser C.M."/>
        </authorList>
    </citation>
    <scope>NUCLEOTIDE SEQUENCE [LARGE SCALE GENOMIC DNA]</scope>
    <source>
        <strain>Ames / isolate Porton</strain>
    </source>
</reference>
<reference key="2">
    <citation type="journal article" date="2009" name="J. Bacteriol.">
        <title>The complete genome sequence of Bacillus anthracis Ames 'Ancestor'.</title>
        <authorList>
            <person name="Ravel J."/>
            <person name="Jiang L."/>
            <person name="Stanley S.T."/>
            <person name="Wilson M.R."/>
            <person name="Decker R.S."/>
            <person name="Read T.D."/>
            <person name="Worsham P."/>
            <person name="Keim P.S."/>
            <person name="Salzberg S.L."/>
            <person name="Fraser-Liggett C.M."/>
            <person name="Rasko D.A."/>
        </authorList>
    </citation>
    <scope>NUCLEOTIDE SEQUENCE [LARGE SCALE GENOMIC DNA]</scope>
    <source>
        <strain>Ames ancestor</strain>
    </source>
</reference>
<reference key="3">
    <citation type="submission" date="2004-01" db="EMBL/GenBank/DDBJ databases">
        <title>Complete genome sequence of Bacillus anthracis Sterne.</title>
        <authorList>
            <person name="Brettin T.S."/>
            <person name="Bruce D."/>
            <person name="Challacombe J.F."/>
            <person name="Gilna P."/>
            <person name="Han C."/>
            <person name="Hill K."/>
            <person name="Hitchcock P."/>
            <person name="Jackson P."/>
            <person name="Keim P."/>
            <person name="Longmire J."/>
            <person name="Lucas S."/>
            <person name="Okinaka R."/>
            <person name="Richardson P."/>
            <person name="Rubin E."/>
            <person name="Tice H."/>
        </authorList>
    </citation>
    <scope>NUCLEOTIDE SEQUENCE [LARGE SCALE GENOMIC DNA]</scope>
    <source>
        <strain>Sterne</strain>
    </source>
</reference>